<keyword id="KW-1038">Host endoplasmic reticulum</keyword>
<keyword id="KW-1040">Host Golgi apparatus</keyword>
<keyword id="KW-0378">Hydrolase</keyword>
<keyword id="KW-0460">Magnesium</keyword>
<keyword id="KW-0464">Manganese</keyword>
<keyword id="KW-0479">Metal-binding</keyword>
<keyword id="KW-0547">Nucleotide-binding</keyword>
<keyword id="KW-0548">Nucleotidyltransferase</keyword>
<keyword id="KW-0696">RNA-directed RNA polymerase</keyword>
<keyword id="KW-0808">Transferase</keyword>
<keyword id="KW-0693">Viral RNA replication</keyword>
<keyword id="KW-0946">Virion</keyword>
<accession>J3TRD1</accession>
<comment type="function">
    <text evidence="2 3 5 8">RNA-dependent RNA polymerase, which is responsible for the replication and transcription of the viral RNA genome using antigenomic RNA as an intermediate (By similarity). During transcription, synthesizes subgenomic RNAs and assures their capping by a cap-snatching mechanism, which involves the endonuclease activity cleaving the host capped pre-mRNAs (PubMed:31914382). These short capped RNAs are then used as primers for viral transcription. The 3'-end of subgenomic mRNAs molecules are not polyadenylated. During replication, the polymerase binds the 5' and 3' vRNA extremities at distinct sites (By similarity). In turn, significant conformational changes occur in the polymerase and in vRNA to initiate active RNA synthesis (By similarity). As a consequence of the use of the same enzyme for both transcription and replication, these mechanisms need to be well coordinated (By similarity).</text>
</comment>
<comment type="catalytic activity">
    <reaction evidence="7">
        <text>RNA(n) + a ribonucleoside 5'-triphosphate = RNA(n+1) + diphosphate</text>
        <dbReference type="Rhea" id="RHEA:21248"/>
        <dbReference type="Rhea" id="RHEA-COMP:14527"/>
        <dbReference type="Rhea" id="RHEA-COMP:17342"/>
        <dbReference type="ChEBI" id="CHEBI:33019"/>
        <dbReference type="ChEBI" id="CHEBI:61557"/>
        <dbReference type="ChEBI" id="CHEBI:140395"/>
        <dbReference type="EC" id="2.7.7.48"/>
    </reaction>
</comment>
<comment type="cofactor">
    <cofactor evidence="5">
        <name>Mn(2+)</name>
        <dbReference type="ChEBI" id="CHEBI:29035"/>
    </cofactor>
    <text evidence="5 9">For endonuclease activity. Binds 2 Mn(2+) ions in the active site (By similarity). The divalent metal ions are crucial for catalytic activity (PubMed:31948728).</text>
</comment>
<comment type="cofactor">
    <cofactor evidence="5">
        <name>Mg(2+)</name>
        <dbReference type="ChEBI" id="CHEBI:18420"/>
    </cofactor>
    <cofactor evidence="5">
        <name>Mn(2+)</name>
        <dbReference type="ChEBI" id="CHEBI:29035"/>
    </cofactor>
    <text evidence="5">For polymerase activity. Initiation activity is stronger in the presence of Mn(2+) than in the presence of Mg(2+).</text>
</comment>
<comment type="activity regulation">
    <text evidence="8">Inhibited by Baloxavir acid (BXA).</text>
</comment>
<comment type="subunit">
    <text evidence="5">Homomultimer (By similarity). Interacts with glycoprotein N; this interaction allows efficient polymerase packaging into virus particles (By similarity). Interacts with nucleoprotein N (By similarity).</text>
</comment>
<comment type="subcellular location">
    <subcellularLocation>
        <location evidence="3">Host Golgi apparatus</location>
    </subcellularLocation>
    <subcellularLocation>
        <location evidence="3">Host endoplasmic reticulum</location>
    </subcellularLocation>
    <subcellularLocation>
        <location evidence="3">Host endoplasmic reticulum-Golgi intermediate compartment</location>
    </subcellularLocation>
    <subcellularLocation>
        <location evidence="4">Virion</location>
    </subcellularLocation>
</comment>
<comment type="domain">
    <text evidence="1 2 3">The N-terminus contains the endonuclease activity (endoN) (By similarity). The central region contains the RdRp activity (By similarity). The C-terminus contains the cap-binding region (By similarity).</text>
</comment>
<comment type="miscellaneous">
    <text evidence="10">Classified as His(+) endonuclease since it has a histidine upstream of the active site that coordinates the first cation.</text>
</comment>
<comment type="similarity">
    <text evidence="11">Belongs to the Bunyavirales RNA polymerase family.</text>
</comment>
<organism>
    <name type="scientific">Heartland virus</name>
    <name type="common">HTRV</name>
    <dbReference type="NCBI Taxonomy" id="1216928"/>
    <lineage>
        <taxon>Viruses</taxon>
        <taxon>Riboviria</taxon>
        <taxon>Orthornavirae</taxon>
        <taxon>Negarnaviricota</taxon>
        <taxon>Polyploviricotina</taxon>
        <taxon>Ellioviricetes</taxon>
        <taxon>Bunyavirales</taxon>
        <taxon>Phenuiviridae</taxon>
        <taxon>Bandavirus</taxon>
        <taxon>Bandavirus heartlandense</taxon>
    </lineage>
</organism>
<organismHost>
    <name type="scientific">Alces americanus</name>
    <name type="common">American moose</name>
    <dbReference type="NCBI Taxonomy" id="999462"/>
</organismHost>
<organismHost>
    <name type="scientific">Amblyomma americanum</name>
    <name type="common">Lone star tick</name>
    <dbReference type="NCBI Taxonomy" id="6943"/>
</organismHost>
<organismHost>
    <name type="scientific">Canis latrans</name>
    <name type="common">Coyote</name>
    <dbReference type="NCBI Taxonomy" id="9614"/>
</organismHost>
<organismHost>
    <name type="scientific">Didelphis virginiana</name>
    <name type="common">North American opossum</name>
    <name type="synonym">Didelphis marsupialis virginiana</name>
    <dbReference type="NCBI Taxonomy" id="9267"/>
</organismHost>
<organismHost>
    <name type="scientific">Equus caballus</name>
    <name type="common">Horse</name>
    <dbReference type="NCBI Taxonomy" id="9796"/>
</organismHost>
<organismHost>
    <name type="scientific">Homo sapiens</name>
    <name type="common">Human</name>
    <dbReference type="NCBI Taxonomy" id="9606"/>
</organismHost>
<organismHost>
    <name type="scientific">Odocoileus virginianus</name>
    <name type="common">White-tailed deer</name>
    <dbReference type="NCBI Taxonomy" id="9874"/>
</organismHost>
<organismHost>
    <name type="scientific">Procyon lotor</name>
    <name type="common">Raccoon</name>
    <dbReference type="NCBI Taxonomy" id="9654"/>
</organismHost>
<protein>
    <recommendedName>
        <fullName>RNA-directed RNA polymerase L</fullName>
        <shortName>Protein L</shortName>
        <ecNumber evidence="6">2.7.7.48</ecNumber>
    </recommendedName>
    <alternativeName>
        <fullName>Large structural protein</fullName>
    </alternativeName>
    <alternativeName>
        <fullName evidence="11">Replicase</fullName>
    </alternativeName>
    <alternativeName>
        <fullName evidence="11">Transcriptase</fullName>
    </alternativeName>
    <domain>
        <recommendedName>
            <fullName>cap-snatching endonuclease</fullName>
            <ecNumber evidence="8">3.1.-.-</ecNumber>
        </recommendedName>
    </domain>
</protein>
<reference key="1">
    <citation type="journal article" date="2012" name="N. Engl. J. Med.">
        <title>A newly discovered phlebovirus associated with severe febrile illness following tick bite in two patients in Missouri.</title>
        <authorList>
            <person name="McMullan L.K."/>
            <person name="Folk S.M."/>
            <person name="Kelly A.J."/>
            <person name="MacNeil A."/>
            <person name="Goldsmith C.S."/>
            <person name="Metcalfe M.G."/>
            <person name="Batten B.C."/>
            <person name="Albarino C.G."/>
            <person name="Zaki S.R."/>
            <person name="Rollin P.E."/>
            <person name="Nicholson W.L."/>
            <person name="Nichol S.T."/>
        </authorList>
    </citation>
    <scope>NUCLEOTIDE SEQUENCE [GENOMIC RNA]</scope>
    <source>
        <strain>Isolate Human/United States/1/2009</strain>
        <strain>Isolate Human/United States/2/2009</strain>
    </source>
</reference>
<reference key="2">
    <citation type="journal article" date="2020" name="Cell Rep.">
        <title>The Cap-Snatching SFTSV Endonuclease Domain Is an Antiviral Target.</title>
        <authorList>
            <person name="Wang W."/>
            <person name="Shin W.J."/>
            <person name="Zhang B."/>
            <person name="Choi Y."/>
            <person name="Yoo J.S."/>
            <person name="Zimmerman M.I."/>
            <person name="Frederick T.E."/>
            <person name="Bowman G.R."/>
            <person name="Gross M.L."/>
            <person name="Leung D.W."/>
            <person name="Jung J.U."/>
            <person name="Amarasinghe G.K."/>
        </authorList>
    </citation>
    <scope>CATALYTIC ACTIVITY</scope>
    <scope>ACTIVITY REGULATION</scope>
    <scope>FUNCTION</scope>
</reference>
<reference key="3">
    <citation type="journal article" date="2017" name="Crit. Rev. Microbiol.">
        <title>Bunyaviridae RdRps: structure, motifs, and RNA synthesis machinery.</title>
        <authorList>
            <person name="Amroun A."/>
            <person name="Priet S."/>
            <person name="de Lamballerie X."/>
            <person name="Querat G."/>
        </authorList>
    </citation>
    <scope>REVIEW</scope>
</reference>
<reference key="4">
    <citation type="journal article" date="2020" name="Trends Microbiol.">
        <title>The Cap-Snatching Mechanism of Bunyaviruses.</title>
        <authorList>
            <person name="Olschewski S."/>
            <person name="Cusack S."/>
            <person name="Rosenthal M."/>
        </authorList>
    </citation>
    <scope>REVIEW</scope>
</reference>
<proteinExistence type="evidence at protein level"/>
<dbReference type="EC" id="2.7.7.48" evidence="6"/>
<dbReference type="EC" id="3.1.-.-" evidence="8"/>
<dbReference type="EMBL" id="JX005846">
    <property type="protein sequence ID" value="AFP33395.1"/>
    <property type="molecule type" value="Genomic_RNA"/>
</dbReference>
<dbReference type="RefSeq" id="YP_009047242.1">
    <property type="nucleotide sequence ID" value="NC_024495.1"/>
</dbReference>
<dbReference type="SMR" id="J3TRD1"/>
<dbReference type="KEGG" id="vg:19893500"/>
<dbReference type="Proteomes" id="UP000203778">
    <property type="component" value="Genome"/>
</dbReference>
<dbReference type="GO" id="GO:0044165">
    <property type="term" value="C:host cell endoplasmic reticulum"/>
    <property type="evidence" value="ECO:0007669"/>
    <property type="project" value="UniProtKB-SubCell"/>
</dbReference>
<dbReference type="GO" id="GO:0044172">
    <property type="term" value="C:host cell endoplasmic reticulum-Golgi intermediate compartment"/>
    <property type="evidence" value="ECO:0007669"/>
    <property type="project" value="UniProtKB-SubCell"/>
</dbReference>
<dbReference type="GO" id="GO:0044177">
    <property type="term" value="C:host cell Golgi apparatus"/>
    <property type="evidence" value="ECO:0007669"/>
    <property type="project" value="UniProtKB-SubCell"/>
</dbReference>
<dbReference type="GO" id="GO:0044423">
    <property type="term" value="C:virion component"/>
    <property type="evidence" value="ECO:0007669"/>
    <property type="project" value="UniProtKB-KW"/>
</dbReference>
<dbReference type="GO" id="GO:0016787">
    <property type="term" value="F:hydrolase activity"/>
    <property type="evidence" value="ECO:0007669"/>
    <property type="project" value="UniProtKB-KW"/>
</dbReference>
<dbReference type="GO" id="GO:0046872">
    <property type="term" value="F:metal ion binding"/>
    <property type="evidence" value="ECO:0007669"/>
    <property type="project" value="UniProtKB-KW"/>
</dbReference>
<dbReference type="GO" id="GO:0000166">
    <property type="term" value="F:nucleotide binding"/>
    <property type="evidence" value="ECO:0007669"/>
    <property type="project" value="UniProtKB-KW"/>
</dbReference>
<dbReference type="GO" id="GO:0003968">
    <property type="term" value="F:RNA-directed RNA polymerase activity"/>
    <property type="evidence" value="ECO:0007669"/>
    <property type="project" value="UniProtKB-KW"/>
</dbReference>
<dbReference type="GO" id="GO:0006351">
    <property type="term" value="P:DNA-templated transcription"/>
    <property type="evidence" value="ECO:0007669"/>
    <property type="project" value="InterPro"/>
</dbReference>
<dbReference type="GO" id="GO:0039694">
    <property type="term" value="P:viral RNA genome replication"/>
    <property type="evidence" value="ECO:0007669"/>
    <property type="project" value="InterPro"/>
</dbReference>
<dbReference type="InterPro" id="IPR022531">
    <property type="entry name" value="L_PA-C-like"/>
</dbReference>
<dbReference type="InterPro" id="IPR029124">
    <property type="entry name" value="L_protein_N"/>
</dbReference>
<dbReference type="InterPro" id="IPR007099">
    <property type="entry name" value="RNA-dir_pol_NSvirus"/>
</dbReference>
<dbReference type="InterPro" id="IPR007322">
    <property type="entry name" value="RNA_pol_bunyavir"/>
</dbReference>
<dbReference type="Pfam" id="PF04196">
    <property type="entry name" value="Bunya_RdRp"/>
    <property type="match status" value="1"/>
</dbReference>
<dbReference type="Pfam" id="PF12603">
    <property type="entry name" value="L_PA-C-like"/>
    <property type="match status" value="1"/>
</dbReference>
<dbReference type="Pfam" id="PF15518">
    <property type="entry name" value="L_protein_N"/>
    <property type="match status" value="1"/>
</dbReference>
<dbReference type="PROSITE" id="PS50525">
    <property type="entry name" value="RDRP_SSRNA_NEG_SEG"/>
    <property type="match status" value="1"/>
</dbReference>
<sequence length="2084" mass="236364">MNLEALCSRVLSERGLSTGEPGVYDQIFERPGLPNLEVTVDSTGVVVDVGAIPDSASQLGSSINAGVLTIPLSEAYKINHDFTFSGLTKTTDRKLSEVFPLVHDGSDSMTPDVIHTRLDGTVVVIEFTTTRSTNMGGLEAAYRSKLEKYRDPLNRRTDIMPDASIYFGIIVVSASGVLTNMPLTQDEAEELMFRFCVANEIYSQARAMDAEVELQKSEEEYEAISRARAFFTLFDYDDGKLSEAFPNSDIEMLRRFLSQPVDTSFVTTTLKEKEQEAYKRMCEEHYLKSGMSTKERLEANRSDAIDKTRALMERLHNMSSKELHSNKSTVKLPPWVVKPSDRTLDVKTDTGSGELLNHGPYGELWSRCFLEIVLGNVEGVISSPEKELEIAISDDPEADTPKAAKIKYHRFRPELSLESKHEFSLQGIEGKRWKHSARNVLKDEMSHKTMSPFVDVSNIEEFLIMNNLLNDTSFNREGLQETINLLLEKATEMHQNGLSTALNDSFKRNFNTNVVQWSMWVSCLAQELASALKQHCKPGEFIIKKLMHWPIFVIIKPTKSSSHIFYSLAIKKANIKRRLIGDVFTDTIDAGEWEFSEFKSLKTCKLTNLINLPCTMLNSIAFWREKMGVAPWISRKACSELREQVAITFLMSLEDKSTTEELVTLTRYSQMEGFVSPPLLPKPQKMVEKLEVPLRTKLQVFLFRRHLDAIVRVAASPFPIVARDGRVEWTGTFNAITGRSTGLENMVNNWYIGYYKNKEESTELNALGEMYKKIVEIEAEKPTSSEYLGWGDTSSPKRHEFSRSFLKSACISLEKEIEMRHGKSWKQSLEERVLKELGSKNLLDLATMKATSNFSKEWEAFSEVRTKEYHRSKLLEKMAELIEHGLMWYVDAAGHAWKAVLDDKCMRICLFKKNQHGGLREIYVTNANARLVQFGVETMARCVCELSPHETIANPRLKSSIIENHGLKSARQLGQGTINVNSSNDAKKWSQGHYTTKLAMVLCWFMPAKFHRFIWAGISMFRCKKMMMDLRFLEKLSTKANQKTDDDFRKDLAGAFHGNVEVPWMTQGATYLQTETGMMQGILHFTSSLLHSCVQSFYKAYFLSRLKEGIAGRTIKAAIDVLEGSDDSAIMISLKPASDNEEAMARFLTANLLYSVRVINPLFGIYSSEKSTVNTLFCVEYNSEFHFHKHLVRPTIRWVAASHQISESEALASRQEDYANLLTQCLEGGSSFSLTYLIQCAQLVHHYMLLGLCLHPLFGTFVGMLIEDPDPALGFFIMDNPAFAGGAGFRFNLWRSCKFTNLGKKYAFFFNEIQGKTKGDADYRALDATTGGTLSHSVMTYWGDRRKYQHLLDRMGLPKDWVERIDENPSILYRRPENKQELILRLAEKVHSPGVTSSFSKGHVVPRVVAAGVYLLSRHCFRYTASIHGRGASQKASLIKLLVMSSTSAERNQGRLNPNQERMLFPQVQEYERVLTLLDEVTALTGKFVVRERNIVKSRVELFQEPVDLRCKAENLIAEMWFGLKRTKLGPRLLKEEWDKLRASFSWLSTDHKETLDVGPFLSHVQFRNFIAHVDAKSRSVRLLGAPVKKSGGVTTVSQVVKSNFFPGFILDSSESLDDQERVEGVSILKHILFMTLNGPYTDEQKKAMVLETFQYFALPHAAEVVKRSRSLTLCLMKNFIEQRGGSILDQIEKAQSGTVGGFSKPQKPYRKQSGGIGYKGKGVWSGIMENTNVQILIDGDGSSNWIEEIRLSSESRLFDVIESVRRLCDDINVNNRVTSSFRGHCMVRLSNFKVKPASRVEGCPVRLMPSSFRIKELQNPDEVFLRVRGDILNLSILLQEDRVMNLLSYRARDTDISESAASYLWMNRTDFSFGKKEPSCSWMCLKTLDSWAWNQAARVLERNIKTPGIDNTAMGNIFKDCLESSLRKQGLLRSRIAEMVERHVIPLTSQELVDILEEDVDFSEMMQSDIMEGDLDIDILMEGSPMLWAAEVEEMGEAMVILSQSGKYYHLKLMDQAATTLSTILGKDGCRLLLGRPTGRSNLREQVKPYLTLLQIREGDVNWVSEYKDDTRGLDEDSAEMWG</sequence>
<name>L_HTRV</name>
<evidence type="ECO:0000250" key="1">
    <source>
        <dbReference type="UniProtKB" id="A2SZS3"/>
    </source>
</evidence>
<evidence type="ECO:0000250" key="2">
    <source>
        <dbReference type="UniProtKB" id="A5HC98"/>
    </source>
</evidence>
<evidence type="ECO:0000250" key="3">
    <source>
        <dbReference type="UniProtKB" id="I0DF35"/>
    </source>
</evidence>
<evidence type="ECO:0000250" key="4">
    <source>
        <dbReference type="UniProtKB" id="P20470"/>
    </source>
</evidence>
<evidence type="ECO:0000250" key="5">
    <source>
        <dbReference type="UniProtKB" id="P27316"/>
    </source>
</evidence>
<evidence type="ECO:0000250" key="6">
    <source>
        <dbReference type="UniProtKB" id="P33453"/>
    </source>
</evidence>
<evidence type="ECO:0000255" key="7">
    <source>
        <dbReference type="PROSITE-ProRule" id="PRU00539"/>
    </source>
</evidence>
<evidence type="ECO:0000269" key="8">
    <source>
    </source>
</evidence>
<evidence type="ECO:0000269" key="9">
    <source>
    </source>
</evidence>
<evidence type="ECO:0000303" key="10">
    <source>
    </source>
</evidence>
<evidence type="ECO:0000305" key="11"/>
<gene>
    <name type="primary">L</name>
</gene>
<feature type="chain" id="PRO_0000456060" description="RNA-directed RNA polymerase L">
    <location>
        <begin position="1"/>
        <end position="2084"/>
    </location>
</feature>
<feature type="domain" description="RdRp catalytic" evidence="7">
    <location>
        <begin position="969"/>
        <end position="1172"/>
    </location>
</feature>
<feature type="region of interest" description="Endonuclease" evidence="2">
    <location>
        <begin position="20"/>
        <end position="221"/>
    </location>
</feature>
<feature type="region of interest" description="Cap-binding" evidence="2">
    <location>
        <begin position="1696"/>
        <end position="1810"/>
    </location>
</feature>
<feature type="active site" description="For endonuclease activity" evidence="3">
    <location>
        <position position="145"/>
    </location>
</feature>
<feature type="binding site" evidence="2">
    <location>
        <position position="80"/>
    </location>
    <ligand>
        <name>Mn(2+)</name>
        <dbReference type="ChEBI" id="CHEBI:29035"/>
        <label>1</label>
    </ligand>
</feature>
<feature type="binding site" evidence="2">
    <location>
        <position position="112"/>
    </location>
    <ligand>
        <name>Mn(2+)</name>
        <dbReference type="ChEBI" id="CHEBI:29035"/>
        <label>1</label>
    </ligand>
</feature>
<feature type="binding site" evidence="2">
    <location>
        <position position="112"/>
    </location>
    <ligand>
        <name>Mn(2+)</name>
        <dbReference type="ChEBI" id="CHEBI:29035"/>
        <label>2</label>
    </ligand>
</feature>
<feature type="binding site" evidence="2">
    <location>
        <position position="126"/>
    </location>
    <ligand>
        <name>Mn(2+)</name>
        <dbReference type="ChEBI" id="CHEBI:29035"/>
        <label>1</label>
    </ligand>
</feature>
<feature type="binding site" evidence="3">
    <location>
        <position position="1127"/>
    </location>
    <ligand>
        <name>Mg(2+)</name>
        <dbReference type="ChEBI" id="CHEBI:18420"/>
        <note>catalytic; for RdRp activity</note>
    </ligand>
</feature>
<feature type="site" description="Interaction with the cap substrate" evidence="1">
    <location>
        <position position="1703"/>
    </location>
</feature>
<feature type="site" description="Interaction with the cap substrate" evidence="1">
    <location>
        <position position="1707"/>
    </location>
</feature>
<feature type="site" description="Interaction with the cap substrate" evidence="1">
    <location>
        <position position="1719"/>
    </location>
</feature>
<feature type="site" description="Interaction with the cap substrate" evidence="1">
    <location>
        <position position="1772"/>
    </location>
</feature>